<feature type="chain" id="PRO_1000195029" description="Ribosomal RNA large subunit methyltransferase E">
    <location>
        <begin position="1"/>
        <end position="210"/>
    </location>
</feature>
<feature type="active site" description="Proton acceptor" evidence="1">
    <location>
        <position position="162"/>
    </location>
</feature>
<feature type="binding site" evidence="1">
    <location>
        <position position="61"/>
    </location>
    <ligand>
        <name>S-adenosyl-L-methionine</name>
        <dbReference type="ChEBI" id="CHEBI:59789"/>
    </ligand>
</feature>
<feature type="binding site" evidence="1">
    <location>
        <position position="63"/>
    </location>
    <ligand>
        <name>S-adenosyl-L-methionine</name>
        <dbReference type="ChEBI" id="CHEBI:59789"/>
    </ligand>
</feature>
<feature type="binding site" evidence="1">
    <location>
        <position position="81"/>
    </location>
    <ligand>
        <name>S-adenosyl-L-methionine</name>
        <dbReference type="ChEBI" id="CHEBI:59789"/>
    </ligand>
</feature>
<feature type="binding site" evidence="1">
    <location>
        <position position="97"/>
    </location>
    <ligand>
        <name>S-adenosyl-L-methionine</name>
        <dbReference type="ChEBI" id="CHEBI:59789"/>
    </ligand>
</feature>
<feature type="binding site" evidence="1">
    <location>
        <position position="122"/>
    </location>
    <ligand>
        <name>S-adenosyl-L-methionine</name>
        <dbReference type="ChEBI" id="CHEBI:59789"/>
    </ligand>
</feature>
<keyword id="KW-0963">Cytoplasm</keyword>
<keyword id="KW-0489">Methyltransferase</keyword>
<keyword id="KW-0698">rRNA processing</keyword>
<keyword id="KW-0949">S-adenosyl-L-methionine</keyword>
<keyword id="KW-0808">Transferase</keyword>
<gene>
    <name evidence="1" type="primary">rlmE</name>
    <name evidence="1" type="synonym">ftsJ</name>
    <name evidence="1" type="synonym">rrmJ</name>
    <name type="ordered locus">PXO_00159</name>
</gene>
<protein>
    <recommendedName>
        <fullName evidence="1">Ribosomal RNA large subunit methyltransferase E</fullName>
        <ecNumber evidence="1">2.1.1.166</ecNumber>
    </recommendedName>
    <alternativeName>
        <fullName evidence="1">23S rRNA Um2552 methyltransferase</fullName>
    </alternativeName>
    <alternativeName>
        <fullName evidence="1">rRNA (uridine-2'-O-)-methyltransferase</fullName>
    </alternativeName>
</protein>
<comment type="function">
    <text evidence="1">Specifically methylates the uridine in position 2552 of 23S rRNA at the 2'-O position of the ribose in the fully assembled 50S ribosomal subunit.</text>
</comment>
<comment type="catalytic activity">
    <reaction evidence="1">
        <text>uridine(2552) in 23S rRNA + S-adenosyl-L-methionine = 2'-O-methyluridine(2552) in 23S rRNA + S-adenosyl-L-homocysteine + H(+)</text>
        <dbReference type="Rhea" id="RHEA:42720"/>
        <dbReference type="Rhea" id="RHEA-COMP:10202"/>
        <dbReference type="Rhea" id="RHEA-COMP:10203"/>
        <dbReference type="ChEBI" id="CHEBI:15378"/>
        <dbReference type="ChEBI" id="CHEBI:57856"/>
        <dbReference type="ChEBI" id="CHEBI:59789"/>
        <dbReference type="ChEBI" id="CHEBI:65315"/>
        <dbReference type="ChEBI" id="CHEBI:74478"/>
        <dbReference type="EC" id="2.1.1.166"/>
    </reaction>
</comment>
<comment type="subcellular location">
    <subcellularLocation>
        <location evidence="1">Cytoplasm</location>
    </subcellularLocation>
</comment>
<comment type="similarity">
    <text evidence="1">Belongs to the class I-like SAM-binding methyltransferase superfamily. RNA methyltransferase RlmE family.</text>
</comment>
<sequence length="210" mass="23452">MPSRSKSSQRWLKEHFADPYVKKARAEGMRSRAAYKLEELLQRDRLLKPGMVVVDLGAAPGGWSQQVRKSMGDSGRVVALDILDMPALAGVEFLHGDFREQAVLSQFEAMLGDVPVDLVLSDMAPNKSGMDAVDQPRMMHLAELAMEFADAHLKPGGAFLIKLFQGVGSDDYIRELRRRYEKVTIRKPAASRKRSPEVYALGQGKRVQIK</sequence>
<name>RLME_XANOP</name>
<reference key="1">
    <citation type="journal article" date="2008" name="BMC Genomics">
        <title>Genome sequence and rapid evolution of the rice pathogen Xanthomonas oryzae pv. oryzae PXO99A.</title>
        <authorList>
            <person name="Salzberg S.L."/>
            <person name="Sommer D.D."/>
            <person name="Schatz M.C."/>
            <person name="Phillippy A.M."/>
            <person name="Rabinowicz P.D."/>
            <person name="Tsuge S."/>
            <person name="Furutani A."/>
            <person name="Ochiai H."/>
            <person name="Delcher A.L."/>
            <person name="Kelley D."/>
            <person name="Madupu R."/>
            <person name="Puiu D."/>
            <person name="Radune D."/>
            <person name="Shumway M."/>
            <person name="Trapnell C."/>
            <person name="Aparna G."/>
            <person name="Jha G."/>
            <person name="Pandey A."/>
            <person name="Patil P.B."/>
            <person name="Ishihara H."/>
            <person name="Meyer D.F."/>
            <person name="Szurek B."/>
            <person name="Verdier V."/>
            <person name="Koebnik R."/>
            <person name="Dow J.M."/>
            <person name="Ryan R.P."/>
            <person name="Hirata H."/>
            <person name="Tsuyumu S."/>
            <person name="Won Lee S."/>
            <person name="Seo Y.-S."/>
            <person name="Sriariyanum M."/>
            <person name="Ronald P.C."/>
            <person name="Sonti R.V."/>
            <person name="Van Sluys M.-A."/>
            <person name="Leach J.E."/>
            <person name="White F.F."/>
            <person name="Bogdanove A.J."/>
        </authorList>
    </citation>
    <scope>NUCLEOTIDE SEQUENCE [LARGE SCALE GENOMIC DNA]</scope>
    <source>
        <strain>PXO99A</strain>
    </source>
</reference>
<organism>
    <name type="scientific">Xanthomonas oryzae pv. oryzae (strain PXO99A)</name>
    <dbReference type="NCBI Taxonomy" id="360094"/>
    <lineage>
        <taxon>Bacteria</taxon>
        <taxon>Pseudomonadati</taxon>
        <taxon>Pseudomonadota</taxon>
        <taxon>Gammaproteobacteria</taxon>
        <taxon>Lysobacterales</taxon>
        <taxon>Lysobacteraceae</taxon>
        <taxon>Xanthomonas</taxon>
    </lineage>
</organism>
<accession>B2SUB8</accession>
<proteinExistence type="inferred from homology"/>
<evidence type="ECO:0000255" key="1">
    <source>
        <dbReference type="HAMAP-Rule" id="MF_01547"/>
    </source>
</evidence>
<dbReference type="EC" id="2.1.1.166" evidence="1"/>
<dbReference type="EMBL" id="CP000967">
    <property type="protein sequence ID" value="ACD58308.1"/>
    <property type="molecule type" value="Genomic_DNA"/>
</dbReference>
<dbReference type="RefSeq" id="WP_011408890.1">
    <property type="nucleotide sequence ID" value="NC_010717.2"/>
</dbReference>
<dbReference type="SMR" id="B2SUB8"/>
<dbReference type="GeneID" id="77337161"/>
<dbReference type="KEGG" id="xop:PXO_00159"/>
<dbReference type="eggNOG" id="COG0293">
    <property type="taxonomic scope" value="Bacteria"/>
</dbReference>
<dbReference type="HOGENOM" id="CLU_009422_4_0_6"/>
<dbReference type="Proteomes" id="UP000001740">
    <property type="component" value="Chromosome"/>
</dbReference>
<dbReference type="GO" id="GO:0005737">
    <property type="term" value="C:cytoplasm"/>
    <property type="evidence" value="ECO:0007669"/>
    <property type="project" value="UniProtKB-SubCell"/>
</dbReference>
<dbReference type="GO" id="GO:0008650">
    <property type="term" value="F:rRNA (uridine-2'-O-)-methyltransferase activity"/>
    <property type="evidence" value="ECO:0007669"/>
    <property type="project" value="UniProtKB-UniRule"/>
</dbReference>
<dbReference type="FunFam" id="3.40.50.150:FF:000005">
    <property type="entry name" value="Ribosomal RNA large subunit methyltransferase E"/>
    <property type="match status" value="1"/>
</dbReference>
<dbReference type="Gene3D" id="3.40.50.150">
    <property type="entry name" value="Vaccinia Virus protein VP39"/>
    <property type="match status" value="1"/>
</dbReference>
<dbReference type="HAMAP" id="MF_01547">
    <property type="entry name" value="RNA_methyltr_E"/>
    <property type="match status" value="1"/>
</dbReference>
<dbReference type="InterPro" id="IPR050082">
    <property type="entry name" value="RNA_methyltr_RlmE"/>
</dbReference>
<dbReference type="InterPro" id="IPR002877">
    <property type="entry name" value="RNA_MeTrfase_FtsJ_dom"/>
</dbReference>
<dbReference type="InterPro" id="IPR015507">
    <property type="entry name" value="rRNA-MeTfrase_E"/>
</dbReference>
<dbReference type="InterPro" id="IPR029063">
    <property type="entry name" value="SAM-dependent_MTases_sf"/>
</dbReference>
<dbReference type="NCBIfam" id="NF008390">
    <property type="entry name" value="PRK11188.1"/>
    <property type="match status" value="1"/>
</dbReference>
<dbReference type="PANTHER" id="PTHR10920">
    <property type="entry name" value="RIBOSOMAL RNA METHYLTRANSFERASE"/>
    <property type="match status" value="1"/>
</dbReference>
<dbReference type="PANTHER" id="PTHR10920:SF18">
    <property type="entry name" value="RRNA METHYLTRANSFERASE 2, MITOCHONDRIAL"/>
    <property type="match status" value="1"/>
</dbReference>
<dbReference type="Pfam" id="PF01728">
    <property type="entry name" value="FtsJ"/>
    <property type="match status" value="1"/>
</dbReference>
<dbReference type="PIRSF" id="PIRSF005461">
    <property type="entry name" value="23S_rRNA_mtase"/>
    <property type="match status" value="1"/>
</dbReference>
<dbReference type="SUPFAM" id="SSF53335">
    <property type="entry name" value="S-adenosyl-L-methionine-dependent methyltransferases"/>
    <property type="match status" value="1"/>
</dbReference>